<proteinExistence type="inferred from homology"/>
<evidence type="ECO:0000255" key="1">
    <source>
        <dbReference type="HAMAP-Rule" id="MF_00530"/>
    </source>
</evidence>
<keyword id="KW-0066">ATP synthesis</keyword>
<keyword id="KW-0997">Cell inner membrane</keyword>
<keyword id="KW-1003">Cell membrane</keyword>
<keyword id="KW-0139">CF(1)</keyword>
<keyword id="KW-0375">Hydrogen ion transport</keyword>
<keyword id="KW-0406">Ion transport</keyword>
<keyword id="KW-0472">Membrane</keyword>
<keyword id="KW-1185">Reference proteome</keyword>
<keyword id="KW-0813">Transport</keyword>
<protein>
    <recommendedName>
        <fullName evidence="1">ATP synthase epsilon chain</fullName>
    </recommendedName>
    <alternativeName>
        <fullName evidence="1">ATP synthase F1 sector epsilon subunit</fullName>
    </alternativeName>
    <alternativeName>
        <fullName evidence="1">F-ATPase epsilon subunit</fullName>
    </alternativeName>
</protein>
<gene>
    <name evidence="1" type="primary">atpC</name>
    <name type="ordered locus">HD_0011</name>
</gene>
<organism>
    <name type="scientific">Haemophilus ducreyi (strain 35000HP / ATCC 700724)</name>
    <dbReference type="NCBI Taxonomy" id="233412"/>
    <lineage>
        <taxon>Bacteria</taxon>
        <taxon>Pseudomonadati</taxon>
        <taxon>Pseudomonadota</taxon>
        <taxon>Gammaproteobacteria</taxon>
        <taxon>Pasteurellales</taxon>
        <taxon>Pasteurellaceae</taxon>
        <taxon>Haemophilus</taxon>
    </lineage>
</organism>
<name>ATPE_HAEDU</name>
<comment type="function">
    <text evidence="1">Produces ATP from ADP in the presence of a proton gradient across the membrane.</text>
</comment>
<comment type="subunit">
    <text>F-type ATPases have 2 components, CF(1) - the catalytic core - and CF(0) - the membrane proton channel. CF(1) has five subunits: alpha(3), beta(3), gamma(1), delta(1), epsilon(1). CF(0) has three main subunits: a, b and c.</text>
</comment>
<comment type="subcellular location">
    <subcellularLocation>
        <location evidence="1">Cell inner membrane</location>
        <topology evidence="1">Peripheral membrane protein</topology>
    </subcellularLocation>
</comment>
<comment type="similarity">
    <text evidence="1">Belongs to the ATPase epsilon chain family.</text>
</comment>
<sequence length="139" mass="15406">MASQFELRIVSAEKQIFNGQVVSVRVSGVEGELGIYAGHTPLLTAIKPGMVKYTLEDNKEEFIYVSGGFLEVQPTIVTVLADIAIRGEELDQQRIIAAKRKAEDTLSKTNNAELSAKLAREIAKLRVYEIVNSKLTKKR</sequence>
<reference key="1">
    <citation type="submission" date="2003-06" db="EMBL/GenBank/DDBJ databases">
        <title>The complete genome sequence of Haemophilus ducreyi.</title>
        <authorList>
            <person name="Munson R.S. Jr."/>
            <person name="Ray W.C."/>
            <person name="Mahairas G."/>
            <person name="Sabo P."/>
            <person name="Mungur R."/>
            <person name="Johnson L."/>
            <person name="Nguyen D."/>
            <person name="Wang J."/>
            <person name="Forst C."/>
            <person name="Hood L."/>
        </authorList>
    </citation>
    <scope>NUCLEOTIDE SEQUENCE [LARGE SCALE GENOMIC DNA]</scope>
    <source>
        <strain>35000HP / ATCC 700724</strain>
    </source>
</reference>
<accession>Q7VPN9</accession>
<feature type="chain" id="PRO_0000188141" description="ATP synthase epsilon chain">
    <location>
        <begin position="1"/>
        <end position="139"/>
    </location>
</feature>
<dbReference type="EMBL" id="AE017143">
    <property type="protein sequence ID" value="AAP95035.1"/>
    <property type="molecule type" value="Genomic_DNA"/>
</dbReference>
<dbReference type="RefSeq" id="WP_010944089.1">
    <property type="nucleotide sequence ID" value="NC_002940.2"/>
</dbReference>
<dbReference type="SMR" id="Q7VPN9"/>
<dbReference type="STRING" id="233412.HD_0011"/>
<dbReference type="KEGG" id="hdu:HD_0011"/>
<dbReference type="eggNOG" id="COG0355">
    <property type="taxonomic scope" value="Bacteria"/>
</dbReference>
<dbReference type="HOGENOM" id="CLU_084338_2_0_6"/>
<dbReference type="OrthoDB" id="9791445at2"/>
<dbReference type="Proteomes" id="UP000001022">
    <property type="component" value="Chromosome"/>
</dbReference>
<dbReference type="GO" id="GO:0005886">
    <property type="term" value="C:plasma membrane"/>
    <property type="evidence" value="ECO:0007669"/>
    <property type="project" value="UniProtKB-SubCell"/>
</dbReference>
<dbReference type="GO" id="GO:0045259">
    <property type="term" value="C:proton-transporting ATP synthase complex"/>
    <property type="evidence" value="ECO:0007669"/>
    <property type="project" value="UniProtKB-KW"/>
</dbReference>
<dbReference type="GO" id="GO:0005524">
    <property type="term" value="F:ATP binding"/>
    <property type="evidence" value="ECO:0007669"/>
    <property type="project" value="UniProtKB-UniRule"/>
</dbReference>
<dbReference type="GO" id="GO:0046933">
    <property type="term" value="F:proton-transporting ATP synthase activity, rotational mechanism"/>
    <property type="evidence" value="ECO:0007669"/>
    <property type="project" value="UniProtKB-UniRule"/>
</dbReference>
<dbReference type="CDD" id="cd12152">
    <property type="entry name" value="F1-ATPase_delta"/>
    <property type="match status" value="1"/>
</dbReference>
<dbReference type="FunFam" id="2.60.15.10:FF:000001">
    <property type="entry name" value="ATP synthase epsilon chain"/>
    <property type="match status" value="1"/>
</dbReference>
<dbReference type="Gene3D" id="2.60.15.10">
    <property type="entry name" value="F0F1 ATP synthase delta/epsilon subunit, N-terminal"/>
    <property type="match status" value="1"/>
</dbReference>
<dbReference type="HAMAP" id="MF_00530">
    <property type="entry name" value="ATP_synth_epsil_bac"/>
    <property type="match status" value="1"/>
</dbReference>
<dbReference type="InterPro" id="IPR036794">
    <property type="entry name" value="ATP_F1_dsu/esu_C_sf"/>
</dbReference>
<dbReference type="InterPro" id="IPR001469">
    <property type="entry name" value="ATP_synth_F1_dsu/esu"/>
</dbReference>
<dbReference type="InterPro" id="IPR020546">
    <property type="entry name" value="ATP_synth_F1_dsu/esu_N"/>
</dbReference>
<dbReference type="InterPro" id="IPR036771">
    <property type="entry name" value="ATPsynth_dsu/esu_N"/>
</dbReference>
<dbReference type="NCBIfam" id="TIGR01216">
    <property type="entry name" value="ATP_synt_epsi"/>
    <property type="match status" value="1"/>
</dbReference>
<dbReference type="NCBIfam" id="NF001847">
    <property type="entry name" value="PRK00571.1-4"/>
    <property type="match status" value="1"/>
</dbReference>
<dbReference type="PANTHER" id="PTHR13822">
    <property type="entry name" value="ATP SYNTHASE DELTA/EPSILON CHAIN"/>
    <property type="match status" value="1"/>
</dbReference>
<dbReference type="PANTHER" id="PTHR13822:SF10">
    <property type="entry name" value="ATP SYNTHASE EPSILON CHAIN, CHLOROPLASTIC"/>
    <property type="match status" value="1"/>
</dbReference>
<dbReference type="Pfam" id="PF02823">
    <property type="entry name" value="ATP-synt_DE_N"/>
    <property type="match status" value="1"/>
</dbReference>
<dbReference type="SUPFAM" id="SSF46604">
    <property type="entry name" value="Epsilon subunit of F1F0-ATP synthase C-terminal domain"/>
    <property type="match status" value="1"/>
</dbReference>
<dbReference type="SUPFAM" id="SSF51344">
    <property type="entry name" value="Epsilon subunit of F1F0-ATP synthase N-terminal domain"/>
    <property type="match status" value="1"/>
</dbReference>